<proteinExistence type="evidence at protein level"/>
<sequence length="200" mass="22322">MKIAILIRHGESDINVKGILSDTIDNNMLTEKGMRQAEHAAAELKGIDIKNFYSSPIKRAFDTAQIIADSFNKDVVTDQRLIEIGLGKARGRKANEFTNGLYSGHITGKIREDLEMEKWDSLQKRVVEAIASREGINVYVTHSDPIRAAISYFLEMGEEETYGLSIKNASMTVIDVEIGRILTLGAISMTDSVRKYLNIQ</sequence>
<gene>
    <name type="ordered locus">Ta1347</name>
</gene>
<protein>
    <recommendedName>
        <fullName>2,3-bisphosphoglycerate-dependent phosphoglycerate mutase</fullName>
        <shortName>BPG-dependent PGAM</shortName>
        <shortName>PGAM</shortName>
        <shortName>Phosphoglyceromutase</shortName>
        <shortName>dPGM</shortName>
        <ecNumber>5.4.2.11</ecNumber>
    </recommendedName>
</protein>
<reference key="1">
    <citation type="journal article" date="2000" name="Nature">
        <title>The genome sequence of the thermoacidophilic scavenger Thermoplasma acidophilum.</title>
        <authorList>
            <person name="Ruepp A."/>
            <person name="Graml W."/>
            <person name="Santos-Martinez M.-L."/>
            <person name="Koretke K.K."/>
            <person name="Volker C."/>
            <person name="Mewes H.-W."/>
            <person name="Frishman D."/>
            <person name="Stocker S."/>
            <person name="Lupas A.N."/>
            <person name="Baumeister W."/>
        </authorList>
    </citation>
    <scope>NUCLEOTIDE SEQUENCE [LARGE SCALE GENOMIC DNA]</scope>
    <source>
        <strain>ATCC 25905 / DSM 1728 / JCM 9062 / NBRC 15155 / AMRC-C165</strain>
    </source>
</reference>
<reference key="2">
    <citation type="journal article" date="2007" name="Extremophiles">
        <title>Characterization of cofactor-dependent and cofactor-independent phosphoglycerate mutases from Archaea.</title>
        <authorList>
            <person name="Johnsen U."/>
            <person name="Schoenheit P."/>
        </authorList>
    </citation>
    <scope>FUNCTION AS A PHOSPHOGLYCERATE MUTASE</scope>
    <scope>SUBUNIT</scope>
    <scope>BIOPHYSICOCHEMICAL PROPERTIES</scope>
    <scope>MUTAGENESIS OF HIS-9</scope>
    <source>
        <strain>ATCC 25905 / DSM 1728 / JCM 9062 / NBRC 15155 / AMRC-C165</strain>
    </source>
</reference>
<organism>
    <name type="scientific">Thermoplasma acidophilum (strain ATCC 25905 / DSM 1728 / JCM 9062 / NBRC 15155 / AMRC-C165)</name>
    <dbReference type="NCBI Taxonomy" id="273075"/>
    <lineage>
        <taxon>Archaea</taxon>
        <taxon>Methanobacteriati</taxon>
        <taxon>Thermoplasmatota</taxon>
        <taxon>Thermoplasmata</taxon>
        <taxon>Thermoplasmatales</taxon>
        <taxon>Thermoplasmataceae</taxon>
        <taxon>Thermoplasma</taxon>
    </lineage>
</organism>
<feature type="chain" id="PRO_0000303675" description="2,3-bisphosphoglycerate-dependent phosphoglycerate mutase">
    <location>
        <begin position="1"/>
        <end position="200"/>
    </location>
</feature>
<feature type="active site" description="Tele-phosphohistidine intermediate" evidence="1">
    <location>
        <position position="9"/>
    </location>
</feature>
<feature type="active site" evidence="1">
    <location>
        <position position="142"/>
    </location>
</feature>
<feature type="mutagenesis site" description="Loss of activity." evidence="2">
    <original>H</original>
    <variation>A</variation>
    <location>
        <position position="9"/>
    </location>
</feature>
<comment type="function">
    <text evidence="2">Catalyzes the interconversion of 2-phosphoglycerate and 3-phosphoglycerate.</text>
</comment>
<comment type="catalytic activity">
    <reaction>
        <text>(2R)-2-phosphoglycerate = (2R)-3-phosphoglycerate</text>
        <dbReference type="Rhea" id="RHEA:15901"/>
        <dbReference type="ChEBI" id="CHEBI:58272"/>
        <dbReference type="ChEBI" id="CHEBI:58289"/>
        <dbReference type="EC" id="5.4.2.11"/>
    </reaction>
</comment>
<comment type="biophysicochemical properties">
    <kinetics>
        <KM evidence="2">17 uM for 2,3-diphosphoglycerate</KM>
    </kinetics>
</comment>
<comment type="pathway">
    <text>Carbohydrate degradation; glycolysis; pyruvate from D-glyceraldehyde 3-phosphate: step 3/5.</text>
</comment>
<comment type="subunit">
    <text evidence="2">Homodimer.</text>
</comment>
<comment type="induction">
    <text>Inhibited by vanadate. Inhibition can partially be relieved by EDTA.</text>
</comment>
<comment type="similarity">
    <text evidence="3">Belongs to the phosphoglycerate mutase family.</text>
</comment>
<comment type="caution">
    <text evidence="3">The original start site is 14 aa downstream of the start site shown here. Experiments from PubMed:17576516 were carried out with the original sequence.</text>
</comment>
<comment type="sequence caution" evidence="3">
    <conflict type="erroneous initiation">
        <sequence resource="EMBL-CDS" id="CAC12468"/>
    </conflict>
    <text>Extended N-terminus.</text>
</comment>
<name>GPM_THEAC</name>
<accession>Q9HIJ2</accession>
<keyword id="KW-0324">Glycolysis</keyword>
<keyword id="KW-0413">Isomerase</keyword>
<keyword id="KW-1185">Reference proteome</keyword>
<dbReference type="EC" id="5.4.2.11"/>
<dbReference type="EMBL" id="AL445067">
    <property type="protein sequence ID" value="CAC12468.1"/>
    <property type="status" value="ALT_INIT"/>
    <property type="molecule type" value="Genomic_DNA"/>
</dbReference>
<dbReference type="RefSeq" id="WP_048162417.1">
    <property type="nucleotide sequence ID" value="NC_002578.1"/>
</dbReference>
<dbReference type="SMR" id="Q9HIJ2"/>
<dbReference type="FunCoup" id="Q9HIJ2">
    <property type="interactions" value="138"/>
</dbReference>
<dbReference type="STRING" id="273075.gene:9572571"/>
<dbReference type="PaxDb" id="273075-Ta1347"/>
<dbReference type="EnsemblBacteria" id="CAC12468">
    <property type="protein sequence ID" value="CAC12468"/>
    <property type="gene ID" value="CAC12468"/>
</dbReference>
<dbReference type="KEGG" id="tac:Ta1347"/>
<dbReference type="eggNOG" id="arCOG01991">
    <property type="taxonomic scope" value="Archaea"/>
</dbReference>
<dbReference type="HOGENOM" id="CLU_033323_9_3_2"/>
<dbReference type="InParanoid" id="Q9HIJ2"/>
<dbReference type="OrthoDB" id="304253at2157"/>
<dbReference type="SABIO-RK" id="Q9HIJ2"/>
<dbReference type="UniPathway" id="UPA00109">
    <property type="reaction ID" value="UER00186"/>
</dbReference>
<dbReference type="Proteomes" id="UP000001024">
    <property type="component" value="Chromosome"/>
</dbReference>
<dbReference type="GO" id="GO:0005737">
    <property type="term" value="C:cytoplasm"/>
    <property type="evidence" value="ECO:0007669"/>
    <property type="project" value="TreeGrafter"/>
</dbReference>
<dbReference type="GO" id="GO:0016791">
    <property type="term" value="F:phosphatase activity"/>
    <property type="evidence" value="ECO:0007669"/>
    <property type="project" value="TreeGrafter"/>
</dbReference>
<dbReference type="GO" id="GO:0004619">
    <property type="term" value="F:phosphoglycerate mutase activity"/>
    <property type="evidence" value="ECO:0007669"/>
    <property type="project" value="UniProtKB-EC"/>
</dbReference>
<dbReference type="GO" id="GO:0006096">
    <property type="term" value="P:glycolytic process"/>
    <property type="evidence" value="ECO:0007669"/>
    <property type="project" value="UniProtKB-UniPathway"/>
</dbReference>
<dbReference type="CDD" id="cd07067">
    <property type="entry name" value="HP_PGM_like"/>
    <property type="match status" value="1"/>
</dbReference>
<dbReference type="Gene3D" id="3.40.50.1240">
    <property type="entry name" value="Phosphoglycerate mutase-like"/>
    <property type="match status" value="1"/>
</dbReference>
<dbReference type="InterPro" id="IPR054929">
    <property type="entry name" value="dPGM_arch"/>
</dbReference>
<dbReference type="InterPro" id="IPR013078">
    <property type="entry name" value="His_Pase_superF_clade-1"/>
</dbReference>
<dbReference type="InterPro" id="IPR029033">
    <property type="entry name" value="His_PPase_superfam"/>
</dbReference>
<dbReference type="InterPro" id="IPR001345">
    <property type="entry name" value="PG/BPGM_mutase_AS"/>
</dbReference>
<dbReference type="InterPro" id="IPR050275">
    <property type="entry name" value="PGM_Phosphatase"/>
</dbReference>
<dbReference type="NCBIfam" id="NF038349">
    <property type="entry name" value="dPGM_arch"/>
    <property type="match status" value="1"/>
</dbReference>
<dbReference type="PANTHER" id="PTHR48100">
    <property type="entry name" value="BROAD-SPECIFICITY PHOSPHATASE YOR283W-RELATED"/>
    <property type="match status" value="1"/>
</dbReference>
<dbReference type="PANTHER" id="PTHR48100:SF1">
    <property type="entry name" value="HISTIDINE PHOSPHATASE FAMILY PROTEIN-RELATED"/>
    <property type="match status" value="1"/>
</dbReference>
<dbReference type="Pfam" id="PF00300">
    <property type="entry name" value="His_Phos_1"/>
    <property type="match status" value="1"/>
</dbReference>
<dbReference type="PIRSF" id="PIRSF000709">
    <property type="entry name" value="6PFK_2-Ptase"/>
    <property type="match status" value="1"/>
</dbReference>
<dbReference type="SMART" id="SM00855">
    <property type="entry name" value="PGAM"/>
    <property type="match status" value="1"/>
</dbReference>
<dbReference type="SUPFAM" id="SSF53254">
    <property type="entry name" value="Phosphoglycerate mutase-like"/>
    <property type="match status" value="1"/>
</dbReference>
<dbReference type="PROSITE" id="PS00175">
    <property type="entry name" value="PG_MUTASE"/>
    <property type="match status" value="1"/>
</dbReference>
<evidence type="ECO:0000250" key="1"/>
<evidence type="ECO:0000269" key="2">
    <source>
    </source>
</evidence>
<evidence type="ECO:0000305" key="3"/>